<reference key="1">
    <citation type="journal article" date="1993" name="Gene">
        <title>Cloning and sequencing of the Klebsiella pneumoniae tonB gene and characterization of Escherichia coli-K. pneumoniae TonB hybrid proteins.</title>
        <authorList>
            <person name="Bruske A."/>
            <person name="Anton M."/>
            <person name="Heller K.J."/>
        </authorList>
    </citation>
    <scope>NUCLEOTIDE SEQUENCE [GENOMIC DNA]</scope>
    <source>
        <strain>1033-5P14 / KAY2026</strain>
    </source>
</reference>
<feature type="chain" id="PRO_0000216345" description="Probable ketoamine kinase in tonB 3'region">
    <location>
        <begin position="1" status="less than"/>
        <end position="123"/>
    </location>
</feature>
<feature type="active site" description="Proton acceptor" evidence="1">
    <location>
        <position position="26"/>
    </location>
</feature>
<feature type="non-terminal residue">
    <location>
        <position position="1"/>
    </location>
</feature>
<evidence type="ECO:0000250" key="1">
    <source>
        <dbReference type="UniProtKB" id="P9WI99"/>
    </source>
</evidence>
<evidence type="ECO:0000250" key="2">
    <source>
        <dbReference type="UniProtKB" id="Q9H479"/>
    </source>
</evidence>
<evidence type="ECO:0000305" key="3"/>
<name>KT3K_KLEPN</name>
<comment type="function">
    <text evidence="2">Ketoamine kinase that phosphorylates ketoamines on the third carbon of the sugar moiety to generate ketoamine 3-phosphate.</text>
</comment>
<comment type="similarity">
    <text evidence="3">Belongs to the fructosamine kinase family.</text>
</comment>
<protein>
    <recommendedName>
        <fullName>Probable ketoamine kinase in tonB 3'region</fullName>
        <ecNumber evidence="2">2.7.1.-</ecNumber>
    </recommendedName>
</protein>
<keyword id="KW-0418">Kinase</keyword>
<keyword id="KW-0808">Transferase</keyword>
<accession>P46382</accession>
<sequence>DIDTLVDMVQQRLANHQPQPSLLHGDLWSGNCALGPDGPYIFDPACYWGDRECDLAMLPMHPEQPPQIYDGYQSVSPLPSGFLDRQPIYQLYTLLNRAILFGGQHLVTAAQQALDDVLMEKMR</sequence>
<dbReference type="EC" id="2.7.1.-" evidence="2"/>
<dbReference type="EMBL" id="X68478">
    <property type="protein sequence ID" value="CAA48499.1"/>
    <property type="molecule type" value="Genomic_DNA"/>
</dbReference>
<dbReference type="SMR" id="P46382"/>
<dbReference type="GO" id="GO:0016301">
    <property type="term" value="F:kinase activity"/>
    <property type="evidence" value="ECO:0007669"/>
    <property type="project" value="UniProtKB-KW"/>
</dbReference>
<dbReference type="Gene3D" id="3.90.1200.10">
    <property type="match status" value="1"/>
</dbReference>
<dbReference type="InterPro" id="IPR016477">
    <property type="entry name" value="Fructo-/Ketosamine-3-kinase"/>
</dbReference>
<dbReference type="InterPro" id="IPR011009">
    <property type="entry name" value="Kinase-like_dom_sf"/>
</dbReference>
<dbReference type="PANTHER" id="PTHR12149">
    <property type="entry name" value="FRUCTOSAMINE 3 KINASE-RELATED PROTEIN"/>
    <property type="match status" value="1"/>
</dbReference>
<dbReference type="PANTHER" id="PTHR12149:SF8">
    <property type="entry name" value="PROTEIN-RIBULOSAMINE 3-KINASE"/>
    <property type="match status" value="1"/>
</dbReference>
<dbReference type="Pfam" id="PF03881">
    <property type="entry name" value="Fructosamin_kin"/>
    <property type="match status" value="1"/>
</dbReference>
<dbReference type="SUPFAM" id="SSF56112">
    <property type="entry name" value="Protein kinase-like (PK-like)"/>
    <property type="match status" value="1"/>
</dbReference>
<proteinExistence type="inferred from homology"/>
<organism>
    <name type="scientific">Klebsiella pneumoniae</name>
    <dbReference type="NCBI Taxonomy" id="573"/>
    <lineage>
        <taxon>Bacteria</taxon>
        <taxon>Pseudomonadati</taxon>
        <taxon>Pseudomonadota</taxon>
        <taxon>Gammaproteobacteria</taxon>
        <taxon>Enterobacterales</taxon>
        <taxon>Enterobacteriaceae</taxon>
        <taxon>Klebsiella/Raoultella group</taxon>
        <taxon>Klebsiella</taxon>
        <taxon>Klebsiella pneumoniae complex</taxon>
    </lineage>
</organism>